<reference key="1">
    <citation type="journal article" date="2005" name="BMC Biol.">
        <title>The complete chloroplast DNA sequences of the charophycean green algae Staurastrum and Zygnema reveal that the chloroplast genome underwent extensive changes during the evolution of the Zygnematales.</title>
        <authorList>
            <person name="Turmel M."/>
            <person name="Otis C."/>
            <person name="Lemieux C."/>
        </authorList>
    </citation>
    <scope>NUCLEOTIDE SEQUENCE [LARGE SCALE GENOMIC DNA]</scope>
</reference>
<dbReference type="EMBL" id="AY958086">
    <property type="protein sequence ID" value="AAX45866.1"/>
    <property type="molecule type" value="Genomic_DNA"/>
</dbReference>
<dbReference type="RefSeq" id="YP_636468.1">
    <property type="nucleotide sequence ID" value="NC_008117.1"/>
</dbReference>
<dbReference type="SMR" id="Q32RQ9"/>
<dbReference type="GeneID" id="4108186"/>
<dbReference type="GO" id="GO:0009507">
    <property type="term" value="C:chloroplast"/>
    <property type="evidence" value="ECO:0007669"/>
    <property type="project" value="UniProtKB-SubCell"/>
</dbReference>
<dbReference type="GO" id="GO:0015935">
    <property type="term" value="C:small ribosomal subunit"/>
    <property type="evidence" value="ECO:0007669"/>
    <property type="project" value="InterPro"/>
</dbReference>
<dbReference type="GO" id="GO:0019843">
    <property type="term" value="F:rRNA binding"/>
    <property type="evidence" value="ECO:0007669"/>
    <property type="project" value="UniProtKB-UniRule"/>
</dbReference>
<dbReference type="GO" id="GO:0003735">
    <property type="term" value="F:structural constituent of ribosome"/>
    <property type="evidence" value="ECO:0007669"/>
    <property type="project" value="InterPro"/>
</dbReference>
<dbReference type="GO" id="GO:0006412">
    <property type="term" value="P:translation"/>
    <property type="evidence" value="ECO:0007669"/>
    <property type="project" value="UniProtKB-UniRule"/>
</dbReference>
<dbReference type="CDD" id="cd03368">
    <property type="entry name" value="Ribosomal_S12"/>
    <property type="match status" value="1"/>
</dbReference>
<dbReference type="FunFam" id="2.40.50.140:FF:000008">
    <property type="entry name" value="30S ribosomal protein S12, chloroplastic"/>
    <property type="match status" value="1"/>
</dbReference>
<dbReference type="Gene3D" id="2.40.50.140">
    <property type="entry name" value="Nucleic acid-binding proteins"/>
    <property type="match status" value="1"/>
</dbReference>
<dbReference type="HAMAP" id="MF_00403_B">
    <property type="entry name" value="Ribosomal_uS12_B"/>
    <property type="match status" value="1"/>
</dbReference>
<dbReference type="InterPro" id="IPR012340">
    <property type="entry name" value="NA-bd_OB-fold"/>
</dbReference>
<dbReference type="InterPro" id="IPR006032">
    <property type="entry name" value="Ribosomal_uS12"/>
</dbReference>
<dbReference type="InterPro" id="IPR005679">
    <property type="entry name" value="Ribosomal_uS12_bac"/>
</dbReference>
<dbReference type="NCBIfam" id="TIGR00981">
    <property type="entry name" value="rpsL_bact"/>
    <property type="match status" value="1"/>
</dbReference>
<dbReference type="PANTHER" id="PTHR11652">
    <property type="entry name" value="30S RIBOSOMAL PROTEIN S12 FAMILY MEMBER"/>
    <property type="match status" value="1"/>
</dbReference>
<dbReference type="Pfam" id="PF00164">
    <property type="entry name" value="Ribosom_S12_S23"/>
    <property type="match status" value="1"/>
</dbReference>
<dbReference type="PIRSF" id="PIRSF002133">
    <property type="entry name" value="Ribosomal_S12/S23"/>
    <property type="match status" value="1"/>
</dbReference>
<dbReference type="PRINTS" id="PR01034">
    <property type="entry name" value="RIBOSOMALS12"/>
</dbReference>
<dbReference type="SUPFAM" id="SSF50249">
    <property type="entry name" value="Nucleic acid-binding proteins"/>
    <property type="match status" value="1"/>
</dbReference>
<dbReference type="PROSITE" id="PS00055">
    <property type="entry name" value="RIBOSOMAL_S12"/>
    <property type="match status" value="1"/>
</dbReference>
<evidence type="ECO:0000250" key="1"/>
<evidence type="ECO:0000256" key="2">
    <source>
        <dbReference type="SAM" id="MobiDB-lite"/>
    </source>
</evidence>
<evidence type="ECO:0000305" key="3"/>
<feature type="chain" id="PRO_0000276635" description="Small ribosomal subunit protein uS12c">
    <location>
        <begin position="1"/>
        <end position="123"/>
    </location>
</feature>
<feature type="region of interest" description="Disordered" evidence="2">
    <location>
        <begin position="1"/>
        <end position="27"/>
    </location>
</feature>
<feature type="compositionally biased region" description="Polar residues" evidence="2">
    <location>
        <begin position="1"/>
        <end position="20"/>
    </location>
</feature>
<organism>
    <name type="scientific">Zygnema circumcarinatum</name>
    <name type="common">Green alga</name>
    <dbReference type="NCBI Taxonomy" id="35869"/>
    <lineage>
        <taxon>Eukaryota</taxon>
        <taxon>Viridiplantae</taxon>
        <taxon>Streptophyta</taxon>
        <taxon>Zygnematophyceae</taxon>
        <taxon>Zygnematophycidae</taxon>
        <taxon>Zygnematales</taxon>
        <taxon>Zygnemataceae</taxon>
        <taxon>Zygnema</taxon>
    </lineage>
</organism>
<name>RR12_ZYGCR</name>
<protein>
    <recommendedName>
        <fullName evidence="3">Small ribosomal subunit protein uS12c</fullName>
    </recommendedName>
    <alternativeName>
        <fullName>30S ribosomal protein S12, chloroplastic</fullName>
    </alternativeName>
</protein>
<gene>
    <name type="primary">rps12</name>
</gene>
<accession>Q32RQ9</accession>
<comment type="function">
    <text evidence="1">With S4 and S5 plays an important role in translational accuracy. Located at the interface of the 30S and 50S subunits (By similarity).</text>
</comment>
<comment type="subunit">
    <text evidence="1">Part of the 30S ribosomal subunit.</text>
</comment>
<comment type="subcellular location">
    <subcellularLocation>
        <location>Plastid</location>
        <location>Chloroplast</location>
    </subcellularLocation>
</comment>
<comment type="similarity">
    <text evidence="3">Belongs to the universal ribosomal protein uS12 family.</text>
</comment>
<proteinExistence type="inferred from homology"/>
<sequence>MPTIQQLIRNTRQPTQNRTKSPALKACPQRRGVCTRVYTTTPKKPNSALRKVARVRLTSGFEVTAYIPGIGHNLQEHSVVLIRGGRVKDLPGVRYHIIRGTLDAVGVKDRHQGRSKYGVKRPK</sequence>
<geneLocation type="chloroplast"/>
<keyword id="KW-0150">Chloroplast</keyword>
<keyword id="KW-0934">Plastid</keyword>
<keyword id="KW-0687">Ribonucleoprotein</keyword>
<keyword id="KW-0689">Ribosomal protein</keyword>
<keyword id="KW-0694">RNA-binding</keyword>
<keyword id="KW-0699">rRNA-binding</keyword>